<dbReference type="EC" id="5.4.99.12" evidence="1"/>
<dbReference type="EMBL" id="CP000158">
    <property type="protein sequence ID" value="ABI76878.1"/>
    <property type="molecule type" value="Genomic_DNA"/>
</dbReference>
<dbReference type="RefSeq" id="WP_011645545.1">
    <property type="nucleotide sequence ID" value="NC_008358.1"/>
</dbReference>
<dbReference type="SMR" id="Q0C4U8"/>
<dbReference type="STRING" id="228405.HNE_0515"/>
<dbReference type="KEGG" id="hne:HNE_0515"/>
<dbReference type="eggNOG" id="COG0101">
    <property type="taxonomic scope" value="Bacteria"/>
</dbReference>
<dbReference type="HOGENOM" id="CLU_014673_0_2_5"/>
<dbReference type="Proteomes" id="UP000001959">
    <property type="component" value="Chromosome"/>
</dbReference>
<dbReference type="GO" id="GO:0003723">
    <property type="term" value="F:RNA binding"/>
    <property type="evidence" value="ECO:0007669"/>
    <property type="project" value="InterPro"/>
</dbReference>
<dbReference type="GO" id="GO:0160147">
    <property type="term" value="F:tRNA pseudouridine(38-40) synthase activity"/>
    <property type="evidence" value="ECO:0007669"/>
    <property type="project" value="UniProtKB-EC"/>
</dbReference>
<dbReference type="GO" id="GO:0031119">
    <property type="term" value="P:tRNA pseudouridine synthesis"/>
    <property type="evidence" value="ECO:0007669"/>
    <property type="project" value="UniProtKB-UniRule"/>
</dbReference>
<dbReference type="CDD" id="cd02570">
    <property type="entry name" value="PseudoU_synth_EcTruA"/>
    <property type="match status" value="1"/>
</dbReference>
<dbReference type="FunFam" id="3.30.70.580:FF:000001">
    <property type="entry name" value="tRNA pseudouridine synthase A"/>
    <property type="match status" value="1"/>
</dbReference>
<dbReference type="Gene3D" id="3.30.70.660">
    <property type="entry name" value="Pseudouridine synthase I, catalytic domain, C-terminal subdomain"/>
    <property type="match status" value="1"/>
</dbReference>
<dbReference type="Gene3D" id="3.30.70.580">
    <property type="entry name" value="Pseudouridine synthase I, catalytic domain, N-terminal subdomain"/>
    <property type="match status" value="1"/>
</dbReference>
<dbReference type="HAMAP" id="MF_00171">
    <property type="entry name" value="TruA"/>
    <property type="match status" value="1"/>
</dbReference>
<dbReference type="InterPro" id="IPR020103">
    <property type="entry name" value="PsdUridine_synth_cat_dom_sf"/>
</dbReference>
<dbReference type="InterPro" id="IPR001406">
    <property type="entry name" value="PsdUridine_synth_TruA"/>
</dbReference>
<dbReference type="InterPro" id="IPR020097">
    <property type="entry name" value="PsdUridine_synth_TruA_a/b_dom"/>
</dbReference>
<dbReference type="InterPro" id="IPR020095">
    <property type="entry name" value="PsdUridine_synth_TruA_C"/>
</dbReference>
<dbReference type="InterPro" id="IPR020094">
    <property type="entry name" value="TruA/RsuA/RluB/E/F_N"/>
</dbReference>
<dbReference type="NCBIfam" id="TIGR00071">
    <property type="entry name" value="hisT_truA"/>
    <property type="match status" value="1"/>
</dbReference>
<dbReference type="PANTHER" id="PTHR11142">
    <property type="entry name" value="PSEUDOURIDYLATE SYNTHASE"/>
    <property type="match status" value="1"/>
</dbReference>
<dbReference type="PANTHER" id="PTHR11142:SF0">
    <property type="entry name" value="TRNA PSEUDOURIDINE SYNTHASE-LIKE 1"/>
    <property type="match status" value="1"/>
</dbReference>
<dbReference type="Pfam" id="PF01416">
    <property type="entry name" value="PseudoU_synth_1"/>
    <property type="match status" value="2"/>
</dbReference>
<dbReference type="PIRSF" id="PIRSF001430">
    <property type="entry name" value="tRNA_psdUrid_synth"/>
    <property type="match status" value="1"/>
</dbReference>
<dbReference type="SUPFAM" id="SSF55120">
    <property type="entry name" value="Pseudouridine synthase"/>
    <property type="match status" value="1"/>
</dbReference>
<reference key="1">
    <citation type="journal article" date="2006" name="J. Bacteriol.">
        <title>Comparative genomic evidence for a close relationship between the dimorphic prosthecate bacteria Hyphomonas neptunium and Caulobacter crescentus.</title>
        <authorList>
            <person name="Badger J.H."/>
            <person name="Hoover T.R."/>
            <person name="Brun Y.V."/>
            <person name="Weiner R.M."/>
            <person name="Laub M.T."/>
            <person name="Alexandre G."/>
            <person name="Mrazek J."/>
            <person name="Ren Q."/>
            <person name="Paulsen I.T."/>
            <person name="Nelson K.E."/>
            <person name="Khouri H.M."/>
            <person name="Radune D."/>
            <person name="Sosa J."/>
            <person name="Dodson R.J."/>
            <person name="Sullivan S.A."/>
            <person name="Rosovitz M.J."/>
            <person name="Madupu R."/>
            <person name="Brinkac L.M."/>
            <person name="Durkin A.S."/>
            <person name="Daugherty S.C."/>
            <person name="Kothari S.P."/>
            <person name="Giglio M.G."/>
            <person name="Zhou L."/>
            <person name="Haft D.H."/>
            <person name="Selengut J.D."/>
            <person name="Davidsen T.M."/>
            <person name="Yang Q."/>
            <person name="Zafar N."/>
            <person name="Ward N.L."/>
        </authorList>
    </citation>
    <scope>NUCLEOTIDE SEQUENCE [LARGE SCALE GENOMIC DNA]</scope>
    <source>
        <strain>ATCC 15444</strain>
    </source>
</reference>
<gene>
    <name evidence="1" type="primary">truA</name>
    <name type="ordered locus">HNE_0515</name>
</gene>
<proteinExistence type="inferred from homology"/>
<protein>
    <recommendedName>
        <fullName evidence="1">tRNA pseudouridine synthase A</fullName>
        <ecNumber evidence="1">5.4.99.12</ecNumber>
    </recommendedName>
    <alternativeName>
        <fullName evidence="1">tRNA pseudouridine(38-40) synthase</fullName>
    </alternativeName>
    <alternativeName>
        <fullName evidence="1">tRNA pseudouridylate synthase I</fullName>
    </alternativeName>
    <alternativeName>
        <fullName evidence="1">tRNA-uridine isomerase I</fullName>
    </alternativeName>
</protein>
<comment type="function">
    <text evidence="1">Formation of pseudouridine at positions 38, 39 and 40 in the anticodon stem and loop of transfer RNAs.</text>
</comment>
<comment type="catalytic activity">
    <reaction evidence="1">
        <text>uridine(38/39/40) in tRNA = pseudouridine(38/39/40) in tRNA</text>
        <dbReference type="Rhea" id="RHEA:22376"/>
        <dbReference type="Rhea" id="RHEA-COMP:10085"/>
        <dbReference type="Rhea" id="RHEA-COMP:10087"/>
        <dbReference type="ChEBI" id="CHEBI:65314"/>
        <dbReference type="ChEBI" id="CHEBI:65315"/>
        <dbReference type="EC" id="5.4.99.12"/>
    </reaction>
</comment>
<comment type="subunit">
    <text evidence="1">Homodimer.</text>
</comment>
<comment type="similarity">
    <text evidence="1">Belongs to the tRNA pseudouridine synthase TruA family.</text>
</comment>
<name>TRUA_HYPNA</name>
<organism>
    <name type="scientific">Hyphomonas neptunium (strain ATCC 15444)</name>
    <dbReference type="NCBI Taxonomy" id="228405"/>
    <lineage>
        <taxon>Bacteria</taxon>
        <taxon>Pseudomonadati</taxon>
        <taxon>Pseudomonadota</taxon>
        <taxon>Alphaproteobacteria</taxon>
        <taxon>Hyphomonadales</taxon>
        <taxon>Hyphomonadaceae</taxon>
        <taxon>Hyphomonas</taxon>
    </lineage>
</organism>
<keyword id="KW-0413">Isomerase</keyword>
<keyword id="KW-1185">Reference proteome</keyword>
<keyword id="KW-0819">tRNA processing</keyword>
<evidence type="ECO:0000255" key="1">
    <source>
        <dbReference type="HAMAP-Rule" id="MF_00171"/>
    </source>
</evidence>
<sequence>MPRYRLLIEYNGGPYQGWMRLPGLQTVQGALEAAAAQLDGGPVEVTGAGRTDAGVHATGQVAHMDLRVDRPNKVADAMNYHLRPHPIAVLKADRVEEDFHARFSAIARHYRYIVINRRAHLTHDQGLAWRVPSRLDADKMHEAAQSFVGTHDFTTFRDSECQALSPVKTLTRLDVARYNDRIEFTCSAPSFIHRQVRSLVGSLVEVGRGRHPVKWAREILEAADRTRCGPVAPSDGLFLERVDYPAG</sequence>
<feature type="chain" id="PRO_1000017094" description="tRNA pseudouridine synthase A">
    <location>
        <begin position="1"/>
        <end position="247"/>
    </location>
</feature>
<feature type="active site" description="Nucleophile" evidence="1">
    <location>
        <position position="52"/>
    </location>
</feature>
<feature type="binding site" evidence="1">
    <location>
        <position position="110"/>
    </location>
    <ligand>
        <name>substrate</name>
    </ligand>
</feature>
<accession>Q0C4U8</accession>